<protein>
    <recommendedName>
        <fullName>Uncharacterized 25.0 kDa protein in regB-denV intergenic region</fullName>
    </recommendedName>
</protein>
<gene>
    <name type="primary">y06K</name>
    <name type="synonym">64.0</name>
    <name type="synonym">vs.8</name>
</gene>
<organismHost>
    <name type="scientific">Escherichia coli</name>
    <dbReference type="NCBI Taxonomy" id="562"/>
</organismHost>
<accession>P13318</accession>
<keyword id="KW-1185">Reference proteome</keyword>
<organism>
    <name type="scientific">Enterobacteria phage T4</name>
    <name type="common">Bacteriophage T4</name>
    <dbReference type="NCBI Taxonomy" id="10665"/>
    <lineage>
        <taxon>Viruses</taxon>
        <taxon>Duplodnaviria</taxon>
        <taxon>Heunggongvirae</taxon>
        <taxon>Uroviricota</taxon>
        <taxon>Caudoviricetes</taxon>
        <taxon>Straboviridae</taxon>
        <taxon>Tevenvirinae</taxon>
        <taxon>Tequatrovirus</taxon>
    </lineage>
</organism>
<reference key="1">
    <citation type="journal article" date="1986" name="Nucleic Acids Res.">
        <title>Nucleotide sequence and analysis of the 58.3 to 65.5-kb early region of bacteriophage T4.</title>
        <authorList>
            <person name="Valerie K."/>
            <person name="Stevens J."/>
            <person name="Lynch M."/>
            <person name="Henderson E.E."/>
            <person name="de Riel J.K."/>
        </authorList>
    </citation>
    <scope>NUCLEOTIDE SEQUENCE [GENOMIC DNA]</scope>
</reference>
<reference key="2">
    <citation type="journal article" date="2003" name="Microbiol. Mol. Biol. Rev.">
        <title>Bacteriophage T4 genome.</title>
        <authorList>
            <person name="Miller E.S."/>
            <person name="Kutter E."/>
            <person name="Mosig G."/>
            <person name="Arisaka F."/>
            <person name="Kunisawa T."/>
            <person name="Ruger W."/>
        </authorList>
    </citation>
    <scope>NUCLEOTIDE SEQUENCE [LARGE SCALE GENOMIC DNA]</scope>
</reference>
<proteinExistence type="predicted"/>
<comment type="sequence caution" evidence="1">
    <conflict type="erroneous initiation">
        <sequence resource="EMBL-CDS" id="CAA28217"/>
    </conflict>
</comment>
<comment type="sequence caution" evidence="1">
    <conflict type="erroneous initiation">
        <sequence resource="EMBL-CDS" id="CAA28218"/>
    </conflict>
</comment>
<comment type="sequence caution" evidence="1">
    <conflict type="erroneous initiation">
        <sequence resource="EMBL-CDS" id="CAA28219"/>
    </conflict>
</comment>
<comment type="sequence caution" evidence="1">
    <conflict type="erroneous initiation">
        <sequence resource="EMBL-CDS" id="CAA28220"/>
    </conflict>
</comment>
<evidence type="ECO:0000305" key="1"/>
<dbReference type="EMBL" id="X04567">
    <property type="protein sequence ID" value="CAA28216.1"/>
    <property type="molecule type" value="Genomic_DNA"/>
</dbReference>
<dbReference type="EMBL" id="X04567">
    <property type="protein sequence ID" value="CAA28220.1"/>
    <property type="status" value="ALT_INIT"/>
    <property type="molecule type" value="Genomic_DNA"/>
</dbReference>
<dbReference type="EMBL" id="X04567">
    <property type="protein sequence ID" value="CAA28219.1"/>
    <property type="status" value="ALT_INIT"/>
    <property type="molecule type" value="Genomic_DNA"/>
</dbReference>
<dbReference type="EMBL" id="X04567">
    <property type="protein sequence ID" value="CAA28218.1"/>
    <property type="status" value="ALT_INIT"/>
    <property type="molecule type" value="Genomic_DNA"/>
</dbReference>
<dbReference type="EMBL" id="X04567">
    <property type="protein sequence ID" value="CAA28217.1"/>
    <property type="status" value="ALT_INIT"/>
    <property type="molecule type" value="Genomic_DNA"/>
</dbReference>
<dbReference type="EMBL" id="AF158101">
    <property type="protein sequence ID" value="AAD42678.1"/>
    <property type="molecule type" value="Genomic_DNA"/>
</dbReference>
<dbReference type="RefSeq" id="NP_049732.1">
    <property type="nucleotide sequence ID" value="NC_000866.4"/>
</dbReference>
<dbReference type="GeneID" id="1258713"/>
<dbReference type="KEGG" id="vg:1258713"/>
<dbReference type="OrthoDB" id="11029at10239"/>
<dbReference type="Proteomes" id="UP000009087">
    <property type="component" value="Segment"/>
</dbReference>
<sequence length="219" mass="25027">MRDSRQPVIRSSPSAVMGKYRNGQFMCHGMAQTYRAYREEMRTFLTGPYLSLMNAFTHHSDARVEEICKNEYIPPFEDLLKQYCTLRLDGGRQSGKSIAVTNFAANWLYDGGTVIVLSNTSAYAKISANNIKKEFSRYSNDDIRFRLFTDSVRSFIGNKGSKFRGLKLSRILYIIDEPVKSPDMDKIYSVHIDTVHYCCNSKCCIGGITRPQFFVIGMQ</sequence>
<name>Y06K_BPT4</name>
<feature type="chain" id="PRO_0000165142" description="Uncharacterized 25.0 kDa protein in regB-denV intergenic region">
    <location>
        <begin position="1"/>
        <end position="219"/>
    </location>
</feature>